<proteinExistence type="evidence at transcript level"/>
<accession>Q03467</accession>
<keyword id="KW-0325">Glycoprotein</keyword>
<keyword id="KW-0326">Glycosidase</keyword>
<keyword id="KW-0378">Hydrolase</keyword>
<keyword id="KW-0611">Plant defense</keyword>
<keyword id="KW-0873">Pyrrolidone carboxylic acid</keyword>
<keyword id="KW-0732">Signal</keyword>
<evidence type="ECO:0000250" key="1"/>
<evidence type="ECO:0000250" key="2">
    <source>
        <dbReference type="UniProtKB" id="O22317"/>
    </source>
</evidence>
<evidence type="ECO:0000250" key="3">
    <source>
        <dbReference type="UniProtKB" id="P15797"/>
    </source>
</evidence>
<evidence type="ECO:0000255" key="4"/>
<evidence type="ECO:0000305" key="5"/>
<protein>
    <recommendedName>
        <fullName>Glucan endo-1,3-beta-glucosidase</fullName>
        <ecNumber>3.2.1.39</ecNumber>
    </recommendedName>
    <alternativeName>
        <fullName>(1-&gt;3)-beta-glucan endohydrolase</fullName>
        <shortName>(1-&gt;3)-beta-glucanase</shortName>
    </alternativeName>
    <alternativeName>
        <fullName>Beta-1,3-endoglucanase</fullName>
    </alternativeName>
</protein>
<organism>
    <name type="scientific">Pisum sativum</name>
    <name type="common">Garden pea</name>
    <name type="synonym">Lathyrus oleraceus</name>
    <dbReference type="NCBI Taxonomy" id="3888"/>
    <lineage>
        <taxon>Eukaryota</taxon>
        <taxon>Viridiplantae</taxon>
        <taxon>Streptophyta</taxon>
        <taxon>Embryophyta</taxon>
        <taxon>Tracheophyta</taxon>
        <taxon>Spermatophyta</taxon>
        <taxon>Magnoliopsida</taxon>
        <taxon>eudicotyledons</taxon>
        <taxon>Gunneridae</taxon>
        <taxon>Pentapetalae</taxon>
        <taxon>rosids</taxon>
        <taxon>fabids</taxon>
        <taxon>Fabales</taxon>
        <taxon>Fabaceae</taxon>
        <taxon>Papilionoideae</taxon>
        <taxon>50 kb inversion clade</taxon>
        <taxon>NPAAA clade</taxon>
        <taxon>Hologalegina</taxon>
        <taxon>IRL clade</taxon>
        <taxon>Fabeae</taxon>
        <taxon>Pisum</taxon>
    </lineage>
</organism>
<dbReference type="EC" id="3.2.1.39"/>
<dbReference type="EMBL" id="S51479">
    <property type="protein sequence ID" value="AAB24398.1"/>
    <property type="molecule type" value="Genomic_DNA"/>
</dbReference>
<dbReference type="EMBL" id="L02212">
    <property type="protein sequence ID" value="AAA33648.1"/>
    <property type="molecule type" value="Genomic_DNA"/>
</dbReference>
<dbReference type="EMBL" id="S69419">
    <property type="status" value="NOT_ANNOTATED_CDS"/>
    <property type="molecule type" value="Genomic_DNA"/>
</dbReference>
<dbReference type="PIR" id="T06552">
    <property type="entry name" value="T06552"/>
</dbReference>
<dbReference type="RefSeq" id="NP_001413762.1">
    <property type="nucleotide sequence ID" value="NM_001426833.1"/>
</dbReference>
<dbReference type="SMR" id="Q03467"/>
<dbReference type="CAZy" id="GH17">
    <property type="family name" value="Glycoside Hydrolase Family 17"/>
</dbReference>
<dbReference type="GeneID" id="127073956"/>
<dbReference type="GO" id="GO:0042973">
    <property type="term" value="F:glucan endo-1,3-beta-D-glucosidase activity"/>
    <property type="evidence" value="ECO:0007669"/>
    <property type="project" value="UniProtKB-EC"/>
</dbReference>
<dbReference type="GO" id="GO:0005975">
    <property type="term" value="P:carbohydrate metabolic process"/>
    <property type="evidence" value="ECO:0007669"/>
    <property type="project" value="InterPro"/>
</dbReference>
<dbReference type="GO" id="GO:0006952">
    <property type="term" value="P:defense response"/>
    <property type="evidence" value="ECO:0007669"/>
    <property type="project" value="UniProtKB-KW"/>
</dbReference>
<dbReference type="FunFam" id="3.20.20.80:FF:000010">
    <property type="entry name" value="glucan endo-1,3-beta-glucosidase, basic"/>
    <property type="match status" value="1"/>
</dbReference>
<dbReference type="Gene3D" id="3.20.20.80">
    <property type="entry name" value="Glycosidases"/>
    <property type="match status" value="1"/>
</dbReference>
<dbReference type="InterPro" id="IPR000490">
    <property type="entry name" value="Glyco_hydro_17"/>
</dbReference>
<dbReference type="InterPro" id="IPR044965">
    <property type="entry name" value="Glyco_hydro_17_plant"/>
</dbReference>
<dbReference type="InterPro" id="IPR017853">
    <property type="entry name" value="Glycoside_hydrolase_SF"/>
</dbReference>
<dbReference type="PANTHER" id="PTHR32227">
    <property type="entry name" value="GLUCAN ENDO-1,3-BETA-GLUCOSIDASE BG1-RELATED-RELATED"/>
    <property type="match status" value="1"/>
</dbReference>
<dbReference type="Pfam" id="PF00332">
    <property type="entry name" value="Glyco_hydro_17"/>
    <property type="match status" value="1"/>
</dbReference>
<dbReference type="SUPFAM" id="SSF51445">
    <property type="entry name" value="(Trans)glycosidases"/>
    <property type="match status" value="1"/>
</dbReference>
<dbReference type="PROSITE" id="PS00587">
    <property type="entry name" value="GLYCOSYL_HYDROL_F17"/>
    <property type="match status" value="1"/>
</dbReference>
<sequence>MASFFARTRRFSLVSLFLLELFTINLIPTTDAQIGICYGMMGNNLPPANEVIALYKANNIKRMRLYDPNQPALNALRDSGIELILGIPNSDLQTLATNQDSARQWVQRNVLNFYPSVKIKYIAVGNEVSPVGGSSWLAQYVLPATQNVYQAIRAQGLHDQIKVTTAIDMTLIGNSFPPSKGSFRSDVRSYLDPFIGYLVYAGAPLLVNVYPYFSHIGNPRDISLPYALFTSPGVMVQDGPNGYQNLFDAMLDSVHAALDNTGIGWVNVVVSESGWPSDGGSATSYDNARIYLDNLIRHVGKGTPRRPWATEAYLFAMFDENQKSPELEKHFGVFYPNKQKKYPFGFGGERRDGEIVEGDFNGTVSLKSDM</sequence>
<feature type="signal peptide" evidence="4">
    <location>
        <begin position="1"/>
        <end position="32"/>
    </location>
</feature>
<feature type="chain" id="PRO_0000011855" description="Glucan endo-1,3-beta-glucosidase">
    <location>
        <begin position="33"/>
        <end position="347"/>
    </location>
</feature>
<feature type="propeptide" id="PRO_0000011856" description="Removed in mature form" evidence="1">
    <location>
        <begin position="348"/>
        <end position="370"/>
    </location>
</feature>
<feature type="active site" description="Proton donor" evidence="2">
    <location>
        <position position="127"/>
    </location>
</feature>
<feature type="active site" description="Nucleophile" evidence="2">
    <location>
        <position position="272"/>
    </location>
</feature>
<feature type="modified residue" description="Pyrrolidone carboxylic acid" evidence="3">
    <location>
        <position position="33"/>
    </location>
</feature>
<feature type="glycosylation site" description="N-linked (GlcNAc...) asparagine" evidence="4">
    <location>
        <position position="361"/>
    </location>
</feature>
<reference key="1">
    <citation type="journal article" date="1993" name="Plant Physiol.">
        <title>Nucleotide sequence of a pea (Pisum sativum L.) beta-1,3-glucanase gene.</title>
        <authorList>
            <person name="Chang M.-M."/>
            <person name="Culley D.E."/>
            <person name="Hadwiger L.A."/>
        </authorList>
    </citation>
    <scope>NUCLEOTIDE SEQUENCE [GENOMIC DNA]</scope>
    <source>
        <strain>cv. Alcan</strain>
        <tissue>Leaf</tissue>
    </source>
</reference>
<reference key="2">
    <citation type="journal article" date="1992" name="Plant Mol. Biol.">
        <title>Molecular characterization of a pea beta-1,3-glucanase induced by Fusarium solani and chitosan challenge.</title>
        <authorList>
            <person name="Chang M.-M."/>
            <person name="Hadwiger L.A."/>
            <person name="Horovitz D."/>
        </authorList>
    </citation>
    <scope>NUCLEOTIDE SEQUENCE [GENOMIC DNA] OF 32-370</scope>
    <source>
        <strain>cv. Alcan</strain>
        <tissue>Leaf</tissue>
    </source>
</reference>
<comment type="function">
    <text>Implicated in the defense of plants against pathogens.</text>
</comment>
<comment type="catalytic activity">
    <reaction>
        <text>Hydrolysis of (1-&gt;3)-beta-D-glucosidic linkages in (1-&gt;3)-beta-D-glucans.</text>
        <dbReference type="EC" id="3.2.1.39"/>
    </reaction>
</comment>
<comment type="tissue specificity">
    <text>Constitutively expressed in seedling roots.</text>
</comment>
<comment type="induction">
    <text>By fungal elicitors.</text>
</comment>
<comment type="similarity">
    <text evidence="5">Belongs to the glycosyl hydrolase 17 family.</text>
</comment>
<name>E13B_PEA</name>